<gene>
    <name type="primary">CYM1</name>
    <name type="ordered locus">CAALFM_C306230WA</name>
    <name type="ORF">CaO19.7410</name>
</gene>
<protein>
    <recommendedName>
        <fullName>Presequence protease, mitochondrial</fullName>
        <shortName>PreP</shortName>
        <ecNumber evidence="2">3.4.24.-</ecNumber>
    </recommendedName>
    <alternativeName>
        <fullName>Pitrilysin metalloproteinase</fullName>
    </alternativeName>
</protein>
<sequence length="1034" mass="117525">MLKTRLKQSRAISRVVRRYACSHPISPNLDKYPVGLKLHGYEVTQTSPIPEFSLTAVSLKHTESGATHLHLDSPNDSNNVFSIAFKTNPPDNTGVPHILEHTTLCGSKKFPVRDPFFKMTNRSLSNFMNAMTGHDYTFYPFATTNSKDFENLMDVYLSSVFEPQLNHTDFLQEGWRIENQNVHDISSKLEFKGVVYNEMKGQYSNSAYYFYIKFLESIYPSLNNSGGDPKKIVDLSYEGLLEFHSKNYHPSNAKTFTYGKLPLEDSLSKISKYYESFEKKVSSVDVKQPIFSTDKSEIFDVTIPGPVDTMNGKETSEQYCTSITWNLGNPLDPNMQYDIFKWKILSSLLFDGHNSPFYQELIESGYGDDFSANTGLDSTTALLSFTVGLNYLTKQKVDNFNEKVMEIINNKIIPELSNEESSSYHGRIDAILHQIEIGFKRHKPDFGFGLLSSIVPSWVNGVDPIDTLQVEKILSHFKEDYKQNGLRIFKELLEKTLCNPHSQKFKFTMEPREDFTKQLVKDENLMIEKRVSELTEDNKKAIYEQNLELAKLQLEDQNTEVLPTLTIDDIPKRGDFYAIDLGQVNKKVVHERVVDTNGLVYANALKDISYLPTKLYKYLPLFNNCLTNLAGTENTPITELETKIQMLTGGITFSSKISTDPYNIEQLKLQYVLSGMALKEKSSSVYDLWLEILTTTKFDTSDEVLEKLSVLIKNMGQNQINNIADRGHSYAAAVSSSKLTPSKYISDIVSGLSQVQFVMELNSKLESEGKEYLAKEIIPILQEIQKYVLQGEFRYRLVGNQEIIVENEKLIEKFDKDISSNRPTLSLTVTDGLSALLNSFNYNHTSENVLVNLPFQVGYSSLGKIGSSYSSKDGASLQILSQLYSFKNLHSKIRESNGAYGGGLTYDGLNGTLNFYSYRDPNPVKSIQTFRDSLSYGLDANWNDKDLQEAKLRVFQSVDAPINISSQGASAFFENIDDYLRQERRENFLGTTLKDLRDVTEKYLVDNQNNLVTVIGDNEILNVDNKWQIRNFQV</sequence>
<reference key="1">
    <citation type="journal article" date="2004" name="Proc. Natl. Acad. Sci. U.S.A.">
        <title>The diploid genome sequence of Candida albicans.</title>
        <authorList>
            <person name="Jones T."/>
            <person name="Federspiel N.A."/>
            <person name="Chibana H."/>
            <person name="Dungan J."/>
            <person name="Kalman S."/>
            <person name="Magee B.B."/>
            <person name="Newport G."/>
            <person name="Thorstenson Y.R."/>
            <person name="Agabian N."/>
            <person name="Magee P.T."/>
            <person name="Davis R.W."/>
            <person name="Scherer S."/>
        </authorList>
    </citation>
    <scope>NUCLEOTIDE SEQUENCE [LARGE SCALE GENOMIC DNA]</scope>
    <source>
        <strain>SC5314 / ATCC MYA-2876</strain>
    </source>
</reference>
<reference key="2">
    <citation type="journal article" date="2007" name="Genome Biol.">
        <title>Assembly of the Candida albicans genome into sixteen supercontigs aligned on the eight chromosomes.</title>
        <authorList>
            <person name="van het Hoog M."/>
            <person name="Rast T.J."/>
            <person name="Martchenko M."/>
            <person name="Grindle S."/>
            <person name="Dignard D."/>
            <person name="Hogues H."/>
            <person name="Cuomo C."/>
            <person name="Berriman M."/>
            <person name="Scherer S."/>
            <person name="Magee B.B."/>
            <person name="Whiteway M."/>
            <person name="Chibana H."/>
            <person name="Nantel A."/>
            <person name="Magee P.T."/>
        </authorList>
    </citation>
    <scope>GENOME REANNOTATION</scope>
    <source>
        <strain>SC5314 / ATCC MYA-2876</strain>
    </source>
</reference>
<reference key="3">
    <citation type="journal article" date="2013" name="Genome Biol.">
        <title>Assembly of a phased diploid Candida albicans genome facilitates allele-specific measurements and provides a simple model for repeat and indel structure.</title>
        <authorList>
            <person name="Muzzey D."/>
            <person name="Schwartz K."/>
            <person name="Weissman J.S."/>
            <person name="Sherlock G."/>
        </authorList>
    </citation>
    <scope>NUCLEOTIDE SEQUENCE [LARGE SCALE GENOMIC DNA]</scope>
    <scope>GENOME REANNOTATION</scope>
    <source>
        <strain>SC5314 / ATCC MYA-2876</strain>
    </source>
</reference>
<dbReference type="EC" id="3.4.24.-" evidence="2"/>
<dbReference type="EMBL" id="CP017625">
    <property type="protein sequence ID" value="AOW28630.1"/>
    <property type="molecule type" value="Genomic_DNA"/>
</dbReference>
<dbReference type="RefSeq" id="XP_716075.1">
    <property type="nucleotide sequence ID" value="XM_710982.1"/>
</dbReference>
<dbReference type="SMR" id="Q5A301"/>
<dbReference type="BioGRID" id="1225338">
    <property type="interactions" value="1"/>
</dbReference>
<dbReference type="FunCoup" id="Q5A301">
    <property type="interactions" value="688"/>
</dbReference>
<dbReference type="STRING" id="237561.Q5A301"/>
<dbReference type="MEROPS" id="M16.013"/>
<dbReference type="EnsemblFungi" id="C3_06230W_A-T">
    <property type="protein sequence ID" value="C3_06230W_A-T-p1"/>
    <property type="gene ID" value="C3_06230W_A"/>
</dbReference>
<dbReference type="GeneID" id="3642244"/>
<dbReference type="KEGG" id="cal:CAALFM_C306230WA"/>
<dbReference type="CGD" id="CAL0000201699">
    <property type="gene designation" value="CYM1"/>
</dbReference>
<dbReference type="VEuPathDB" id="FungiDB:C3_06230W_A"/>
<dbReference type="eggNOG" id="KOG2019">
    <property type="taxonomic scope" value="Eukaryota"/>
</dbReference>
<dbReference type="HOGENOM" id="CLU_009165_0_0_1"/>
<dbReference type="InParanoid" id="Q5A301"/>
<dbReference type="OMA" id="FPFQVHY"/>
<dbReference type="OrthoDB" id="10250783at2759"/>
<dbReference type="Proteomes" id="UP000000559">
    <property type="component" value="Chromosome 3"/>
</dbReference>
<dbReference type="GO" id="GO:0005758">
    <property type="term" value="C:mitochondrial intermembrane space"/>
    <property type="evidence" value="ECO:0007669"/>
    <property type="project" value="UniProtKB-SubCell"/>
</dbReference>
<dbReference type="GO" id="GO:0005759">
    <property type="term" value="C:mitochondrial matrix"/>
    <property type="evidence" value="ECO:0000318"/>
    <property type="project" value="GO_Central"/>
</dbReference>
<dbReference type="GO" id="GO:0004176">
    <property type="term" value="F:ATP-dependent peptidase activity"/>
    <property type="evidence" value="ECO:0007669"/>
    <property type="project" value="EnsemblFungi"/>
</dbReference>
<dbReference type="GO" id="GO:0004222">
    <property type="term" value="F:metalloendopeptidase activity"/>
    <property type="evidence" value="ECO:0000318"/>
    <property type="project" value="GO_Central"/>
</dbReference>
<dbReference type="GO" id="GO:0008270">
    <property type="term" value="F:zinc ion binding"/>
    <property type="evidence" value="ECO:0000250"/>
    <property type="project" value="UniProtKB"/>
</dbReference>
<dbReference type="GO" id="GO:0034982">
    <property type="term" value="P:mitochondrial protein processing"/>
    <property type="evidence" value="ECO:0007669"/>
    <property type="project" value="EnsemblFungi"/>
</dbReference>
<dbReference type="GO" id="GO:0016485">
    <property type="term" value="P:protein processing"/>
    <property type="evidence" value="ECO:0000250"/>
    <property type="project" value="UniProtKB"/>
</dbReference>
<dbReference type="GO" id="GO:0051603">
    <property type="term" value="P:proteolysis involved in protein catabolic process"/>
    <property type="evidence" value="ECO:0007669"/>
    <property type="project" value="EnsemblFungi"/>
</dbReference>
<dbReference type="FunFam" id="3.30.830.10:FF:000013">
    <property type="entry name" value="Mitochondrial presequence protease"/>
    <property type="match status" value="1"/>
</dbReference>
<dbReference type="FunFam" id="3.30.830.10:FF:000148">
    <property type="entry name" value="Mitochondrial presequence protease"/>
    <property type="match status" value="1"/>
</dbReference>
<dbReference type="FunFam" id="3.30.830.10:FF:000009">
    <property type="entry name" value="Presequence protease, mitochondrial"/>
    <property type="match status" value="1"/>
</dbReference>
<dbReference type="FunFam" id="3.30.830.10:FF:000011">
    <property type="entry name" value="Presequence protease, mitochondrial"/>
    <property type="match status" value="1"/>
</dbReference>
<dbReference type="Gene3D" id="3.30.830.10">
    <property type="entry name" value="Metalloenzyme, LuxS/M16 peptidase-like"/>
    <property type="match status" value="4"/>
</dbReference>
<dbReference type="InterPro" id="IPR011249">
    <property type="entry name" value="Metalloenz_LuxS/M16"/>
</dbReference>
<dbReference type="InterPro" id="IPR011765">
    <property type="entry name" value="Pept_M16_N"/>
</dbReference>
<dbReference type="InterPro" id="IPR007863">
    <property type="entry name" value="Peptidase_M16_C"/>
</dbReference>
<dbReference type="InterPro" id="IPR013578">
    <property type="entry name" value="Peptidase_M16C_assoc"/>
</dbReference>
<dbReference type="InterPro" id="IPR055130">
    <property type="entry name" value="PreP_C"/>
</dbReference>
<dbReference type="PANTHER" id="PTHR43016">
    <property type="entry name" value="PRESEQUENCE PROTEASE"/>
    <property type="match status" value="1"/>
</dbReference>
<dbReference type="PANTHER" id="PTHR43016:SF13">
    <property type="entry name" value="PRESEQUENCE PROTEASE, MITOCHONDRIAL"/>
    <property type="match status" value="1"/>
</dbReference>
<dbReference type="Pfam" id="PF08367">
    <property type="entry name" value="M16C_assoc"/>
    <property type="match status" value="1"/>
</dbReference>
<dbReference type="Pfam" id="PF00675">
    <property type="entry name" value="Peptidase_M16"/>
    <property type="match status" value="1"/>
</dbReference>
<dbReference type="Pfam" id="PF05193">
    <property type="entry name" value="Peptidase_M16_C"/>
    <property type="match status" value="1"/>
</dbReference>
<dbReference type="Pfam" id="PF22516">
    <property type="entry name" value="PreP_C"/>
    <property type="match status" value="1"/>
</dbReference>
<dbReference type="SMART" id="SM01264">
    <property type="entry name" value="M16C_associated"/>
    <property type="match status" value="1"/>
</dbReference>
<dbReference type="SUPFAM" id="SSF63411">
    <property type="entry name" value="LuxS/MPP-like metallohydrolase"/>
    <property type="match status" value="4"/>
</dbReference>
<accession>Q5A301</accession>
<accession>A0A1D8PKI2</accession>
<name>PREP_CANAL</name>
<feature type="transit peptide" description="Mitochondrion" evidence="5">
    <location>
        <begin position="1"/>
        <end position="26"/>
    </location>
</feature>
<feature type="chain" id="PRO_0000249943" description="Presequence protease, mitochondrial">
    <location>
        <begin position="27"/>
        <end position="1034"/>
    </location>
</feature>
<feature type="active site" description="Proton acceptor" evidence="3">
    <location>
        <position position="100"/>
    </location>
</feature>
<feature type="active site" evidence="4">
    <location>
        <position position="173"/>
    </location>
</feature>
<feature type="binding site" evidence="3">
    <location>
        <position position="97"/>
    </location>
    <ligand>
        <name>Zn(2+)</name>
        <dbReference type="ChEBI" id="CHEBI:29105"/>
        <note>catalytic</note>
    </ligand>
</feature>
<feature type="binding site" evidence="3">
    <location>
        <position position="101"/>
    </location>
    <ligand>
        <name>Zn(2+)</name>
        <dbReference type="ChEBI" id="CHEBI:29105"/>
        <note>catalytic</note>
    </ligand>
</feature>
<feature type="binding site" evidence="3">
    <location>
        <position position="198"/>
    </location>
    <ligand>
        <name>Zn(2+)</name>
        <dbReference type="ChEBI" id="CHEBI:29105"/>
        <note>catalytic</note>
    </ligand>
</feature>
<keyword id="KW-0378">Hydrolase</keyword>
<keyword id="KW-0479">Metal-binding</keyword>
<keyword id="KW-0482">Metalloprotease</keyword>
<keyword id="KW-0496">Mitochondrion</keyword>
<keyword id="KW-0645">Protease</keyword>
<keyword id="KW-1185">Reference proteome</keyword>
<keyword id="KW-0809">Transit peptide</keyword>
<keyword id="KW-0862">Zinc</keyword>
<proteinExistence type="inferred from homology"/>
<comment type="function">
    <text evidence="1 2">Degrades mitochondrial transit peptides after their cleavage in the intermembrane space or in the matrix, and presequence peptides; clearance of these peptides is required to keep the presequence processing machinery running (By similarity). Preferentially cleaves the N-terminal side of paired basic amino acid residues (By similarity). Also degrades other unstructured peptides (By similarity). May function as an ATP-dependent peptidase as opposed to a metalloendopeptidase (By similarity).</text>
</comment>
<comment type="cofactor">
    <cofactor evidence="3">
        <name>Zn(2+)</name>
        <dbReference type="ChEBI" id="CHEBI:29105"/>
    </cofactor>
    <text evidence="3">Binds 1 zinc ion per subunit.</text>
</comment>
<comment type="subunit">
    <text evidence="3">Monomer and homodimer; homodimerization is induced by binding of the substrate.</text>
</comment>
<comment type="subcellular location">
    <subcellularLocation>
        <location evidence="2">Mitochondrion intermembrane space</location>
    </subcellularLocation>
    <subcellularLocation>
        <location evidence="2">Mitochondrion matrix</location>
    </subcellularLocation>
</comment>
<comment type="similarity">
    <text evidence="6">Belongs to the peptidase M16 family. PreP subfamily.</text>
</comment>
<evidence type="ECO:0000250" key="1">
    <source>
        <dbReference type="UniProtKB" id="A0A8H8UNX0"/>
    </source>
</evidence>
<evidence type="ECO:0000250" key="2">
    <source>
        <dbReference type="UniProtKB" id="P32898"/>
    </source>
</evidence>
<evidence type="ECO:0000250" key="3">
    <source>
        <dbReference type="UniProtKB" id="Q5JRX3"/>
    </source>
</evidence>
<evidence type="ECO:0000250" key="4">
    <source>
        <dbReference type="UniProtKB" id="Q9LJL3"/>
    </source>
</evidence>
<evidence type="ECO:0000255" key="5"/>
<evidence type="ECO:0000305" key="6"/>
<organism>
    <name type="scientific">Candida albicans (strain SC5314 / ATCC MYA-2876)</name>
    <name type="common">Yeast</name>
    <dbReference type="NCBI Taxonomy" id="237561"/>
    <lineage>
        <taxon>Eukaryota</taxon>
        <taxon>Fungi</taxon>
        <taxon>Dikarya</taxon>
        <taxon>Ascomycota</taxon>
        <taxon>Saccharomycotina</taxon>
        <taxon>Pichiomycetes</taxon>
        <taxon>Debaryomycetaceae</taxon>
        <taxon>Candida/Lodderomyces clade</taxon>
        <taxon>Candida</taxon>
    </lineage>
</organism>